<gene>
    <name evidence="1" type="primary">pecA</name>
    <name type="synonym">PE_PGRS35</name>
    <name type="ordered locus">MT2036</name>
</gene>
<keyword id="KW-0064">Aspartyl protease</keyword>
<keyword id="KW-0378">Hydrolase</keyword>
<keyword id="KW-0645">Protease</keyword>
<keyword id="KW-1185">Reference proteome</keyword>
<keyword id="KW-0964">Secreted</keyword>
<protein>
    <recommendedName>
        <fullName evidence="1">PE cleavage protein A</fullName>
    </recommendedName>
    <alternativeName>
        <fullName evidence="3">PE-PGRS family protein PE_PGRS35</fullName>
    </alternativeName>
</protein>
<organism>
    <name type="scientific">Mycobacterium tuberculosis (strain CDC 1551 / Oshkosh)</name>
    <dbReference type="NCBI Taxonomy" id="83331"/>
    <lineage>
        <taxon>Bacteria</taxon>
        <taxon>Bacillati</taxon>
        <taxon>Actinomycetota</taxon>
        <taxon>Actinomycetes</taxon>
        <taxon>Mycobacteriales</taxon>
        <taxon>Mycobacteriaceae</taxon>
        <taxon>Mycobacterium</taxon>
        <taxon>Mycobacterium tuberculosis complex</taxon>
    </lineage>
</organism>
<feature type="chain" id="PRO_0000428018" description="PE cleavage protein A">
    <location>
        <begin position="1"/>
        <end position="558"/>
    </location>
</feature>
<feature type="domain" description="PE" evidence="2">
    <location>
        <begin position="1"/>
        <end position="93"/>
    </location>
</feature>
<feature type="active site" evidence="1">
    <location>
        <position position="297"/>
    </location>
</feature>
<sequence>MSFLVVVPEFLTSAAADVENIGSTLRAANAAAAASTTALAAAGADEVSAAVAALFARFGQEYQAVSAQASAFHQQFVQTLNSASGSYAAAEATIASQLQTAQHDLLGAVNAPTETLLGRPLIGDGAPGTATSPNGGAGGLLYGNGGNGYSATASGVGGGAGGSAGLIGNGGAGGAGGPNAPGGAGGNGGWLLGNGGIGGPGGASSIPGMSGGAGGTGGAAGLLGWGANGGAGGLGDGVGVDRGTGGAGGRGGLLYGGYGVSGPGGDGRTVPLEIIHVTEPTVHANVNGGPTSTILVDTGSAGLVVSPEDVGGILGVLHMGLPTGLSISGYSGGLYYIFATYTTTVDFGNGIVTAPTAVNVVLLSIPTSPFAISTYFSALLADPTTTPFEAYFGAVGVDGVLGVGPNAVGPGPSIPTMALPGDLNQGVLIDAPAGELVFGPNPLPAPNVEVVGSPITTLYVKIDGGTPIPVPSIIDSGGVTGTIPSYVIGSGTLPANTNIEVYTSPGGDRLYAFNTNDYRPTVISSGLMNTGFLPFRFQPVYIDYSPSGIGTTVFDHPA</sequence>
<dbReference type="EMBL" id="AE000516">
    <property type="protein sequence ID" value="AAK46311.1"/>
    <property type="molecule type" value="Genomic_DNA"/>
</dbReference>
<dbReference type="PIR" id="E70756">
    <property type="entry name" value="E70756"/>
</dbReference>
<dbReference type="RefSeq" id="WP_003899118.1">
    <property type="nucleotide sequence ID" value="NZ_KK341227.1"/>
</dbReference>
<dbReference type="RefSeq" id="WP_010924471.1">
    <property type="nucleotide sequence ID" value="NC_002755.2"/>
</dbReference>
<dbReference type="SMR" id="P9WIF0"/>
<dbReference type="KEGG" id="mtc:MT2036"/>
<dbReference type="PATRIC" id="fig|83331.31.peg.2191"/>
<dbReference type="HOGENOM" id="CLU_038249_0_0_11"/>
<dbReference type="Proteomes" id="UP000001020">
    <property type="component" value="Chromosome"/>
</dbReference>
<dbReference type="GO" id="GO:0009986">
    <property type="term" value="C:cell surface"/>
    <property type="evidence" value="ECO:0007669"/>
    <property type="project" value="UniProtKB-SubCell"/>
</dbReference>
<dbReference type="GO" id="GO:0005576">
    <property type="term" value="C:extracellular region"/>
    <property type="evidence" value="ECO:0007669"/>
    <property type="project" value="UniProtKB-SubCell"/>
</dbReference>
<dbReference type="GO" id="GO:0004190">
    <property type="term" value="F:aspartic-type endopeptidase activity"/>
    <property type="evidence" value="ECO:0007669"/>
    <property type="project" value="UniProtKB-KW"/>
</dbReference>
<dbReference type="GO" id="GO:0006508">
    <property type="term" value="P:proteolysis"/>
    <property type="evidence" value="ECO:0007669"/>
    <property type="project" value="UniProtKB-KW"/>
</dbReference>
<dbReference type="Gene3D" id="2.40.70.10">
    <property type="entry name" value="Acid Proteases"/>
    <property type="match status" value="1"/>
</dbReference>
<dbReference type="Gene3D" id="1.10.287.850">
    <property type="entry name" value="HP0062-like domain"/>
    <property type="match status" value="1"/>
</dbReference>
<dbReference type="InterPro" id="IPR000084">
    <property type="entry name" value="PE-PGRS_N"/>
</dbReference>
<dbReference type="InterPro" id="IPR048054">
    <property type="entry name" value="PecA_C"/>
</dbReference>
<dbReference type="InterPro" id="IPR021109">
    <property type="entry name" value="Peptidase_aspartic_dom_sf"/>
</dbReference>
<dbReference type="InterPro" id="IPR048996">
    <property type="entry name" value="PGRS_rpt"/>
</dbReference>
<dbReference type="NCBIfam" id="NF038019">
    <property type="entry name" value="PE_process_PecA"/>
    <property type="match status" value="1"/>
</dbReference>
<dbReference type="Pfam" id="PF00934">
    <property type="entry name" value="PE"/>
    <property type="match status" value="1"/>
</dbReference>
<dbReference type="Pfam" id="PF20729">
    <property type="entry name" value="PE-PGRS_C"/>
    <property type="match status" value="1"/>
</dbReference>
<dbReference type="Pfam" id="PF21526">
    <property type="entry name" value="PGRS"/>
    <property type="match status" value="1"/>
</dbReference>
<dbReference type="SUPFAM" id="SSF140459">
    <property type="entry name" value="PE/PPE dimer-like"/>
    <property type="match status" value="1"/>
</dbReference>
<accession>P9WIF0</accession>
<accession>L0T8F8</accession>
<accession>Q10873</accession>
<reference key="1">
    <citation type="journal article" date="2002" name="J. Bacteriol.">
        <title>Whole-genome comparison of Mycobacterium tuberculosis clinical and laboratory strains.</title>
        <authorList>
            <person name="Fleischmann R.D."/>
            <person name="Alland D."/>
            <person name="Eisen J.A."/>
            <person name="Carpenter L."/>
            <person name="White O."/>
            <person name="Peterson J.D."/>
            <person name="DeBoy R.T."/>
            <person name="Dodson R.J."/>
            <person name="Gwinn M.L."/>
            <person name="Haft D.H."/>
            <person name="Hickey E.K."/>
            <person name="Kolonay J.F."/>
            <person name="Nelson W.C."/>
            <person name="Umayam L.A."/>
            <person name="Ermolaeva M.D."/>
            <person name="Salzberg S.L."/>
            <person name="Delcher A."/>
            <person name="Utterback T.R."/>
            <person name="Weidman J.F."/>
            <person name="Khouri H.M."/>
            <person name="Gill J."/>
            <person name="Mikula A."/>
            <person name="Bishai W."/>
            <person name="Jacobs W.R. Jr."/>
            <person name="Venter J.C."/>
            <person name="Fraser C.M."/>
        </authorList>
    </citation>
    <scope>NUCLEOTIDE SEQUENCE [LARGE SCALE GENOMIC DNA]</scope>
    <source>
        <strain>CDC 1551 / Oshkosh</strain>
    </source>
</reference>
<evidence type="ECO:0000250" key="1">
    <source>
        <dbReference type="UniProtKB" id="B2HE92"/>
    </source>
</evidence>
<evidence type="ECO:0000255" key="2"/>
<evidence type="ECO:0000305" key="3"/>
<name>PECA_MYCTO</name>
<comment type="function">
    <text evidence="1">Aspartic protease that processes the lipase LipY and other PE_PGRS proteins. Can also cleave itself.</text>
</comment>
<comment type="subcellular location">
    <subcellularLocation>
        <location evidence="1">Secreted</location>
    </subcellularLocation>
    <subcellularLocation>
        <location evidence="1">Cell surface</location>
    </subcellularLocation>
    <text evidence="1">Secreted via the ESX-5 / type VII secretion system (T7SS).</text>
</comment>
<comment type="PTM">
    <text evidence="1">Undergoes auto-proteolytic processing.</text>
</comment>
<comment type="similarity">
    <text evidence="3">Belongs to the mycobacterial PE family. PGRS subfamily.</text>
</comment>
<proteinExistence type="inferred from homology"/>